<dbReference type="EC" id="5.6.1.7" evidence="1"/>
<dbReference type="EMBL" id="CP000139">
    <property type="protein sequence ID" value="ABR38064.1"/>
    <property type="molecule type" value="Genomic_DNA"/>
</dbReference>
<dbReference type="RefSeq" id="WP_005842327.1">
    <property type="nucleotide sequence ID" value="NZ_JANSWM010000030.1"/>
</dbReference>
<dbReference type="SMR" id="A6KXA0"/>
<dbReference type="STRING" id="435590.BVU_0345"/>
<dbReference type="PaxDb" id="435590-BVU_0345"/>
<dbReference type="GeneID" id="93448593"/>
<dbReference type="KEGG" id="bvu:BVU_0345"/>
<dbReference type="eggNOG" id="COG0459">
    <property type="taxonomic scope" value="Bacteria"/>
</dbReference>
<dbReference type="HOGENOM" id="CLU_016503_3_0_10"/>
<dbReference type="BioCyc" id="BVUL435590:G1G59-363-MONOMER"/>
<dbReference type="Proteomes" id="UP000002861">
    <property type="component" value="Chromosome"/>
</dbReference>
<dbReference type="GO" id="GO:0005737">
    <property type="term" value="C:cytoplasm"/>
    <property type="evidence" value="ECO:0007669"/>
    <property type="project" value="UniProtKB-SubCell"/>
</dbReference>
<dbReference type="GO" id="GO:0005524">
    <property type="term" value="F:ATP binding"/>
    <property type="evidence" value="ECO:0007669"/>
    <property type="project" value="UniProtKB-UniRule"/>
</dbReference>
<dbReference type="GO" id="GO:0140662">
    <property type="term" value="F:ATP-dependent protein folding chaperone"/>
    <property type="evidence" value="ECO:0007669"/>
    <property type="project" value="InterPro"/>
</dbReference>
<dbReference type="GO" id="GO:0016853">
    <property type="term" value="F:isomerase activity"/>
    <property type="evidence" value="ECO:0007669"/>
    <property type="project" value="UniProtKB-KW"/>
</dbReference>
<dbReference type="GO" id="GO:0051082">
    <property type="term" value="F:unfolded protein binding"/>
    <property type="evidence" value="ECO:0007669"/>
    <property type="project" value="UniProtKB-UniRule"/>
</dbReference>
<dbReference type="GO" id="GO:0042026">
    <property type="term" value="P:protein refolding"/>
    <property type="evidence" value="ECO:0007669"/>
    <property type="project" value="UniProtKB-UniRule"/>
</dbReference>
<dbReference type="CDD" id="cd03344">
    <property type="entry name" value="GroEL"/>
    <property type="match status" value="1"/>
</dbReference>
<dbReference type="FunFam" id="3.50.7.10:FF:000001">
    <property type="entry name" value="60 kDa chaperonin"/>
    <property type="match status" value="1"/>
</dbReference>
<dbReference type="Gene3D" id="3.50.7.10">
    <property type="entry name" value="GroEL"/>
    <property type="match status" value="1"/>
</dbReference>
<dbReference type="Gene3D" id="1.10.560.10">
    <property type="entry name" value="GroEL-like equatorial domain"/>
    <property type="match status" value="1"/>
</dbReference>
<dbReference type="Gene3D" id="3.30.260.10">
    <property type="entry name" value="TCP-1-like chaperonin intermediate domain"/>
    <property type="match status" value="1"/>
</dbReference>
<dbReference type="HAMAP" id="MF_00600">
    <property type="entry name" value="CH60"/>
    <property type="match status" value="1"/>
</dbReference>
<dbReference type="InterPro" id="IPR018370">
    <property type="entry name" value="Chaperonin_Cpn60_CS"/>
</dbReference>
<dbReference type="InterPro" id="IPR001844">
    <property type="entry name" value="Cpn60/GroEL"/>
</dbReference>
<dbReference type="InterPro" id="IPR002423">
    <property type="entry name" value="Cpn60/GroEL/TCP-1"/>
</dbReference>
<dbReference type="InterPro" id="IPR027409">
    <property type="entry name" value="GroEL-like_apical_dom_sf"/>
</dbReference>
<dbReference type="InterPro" id="IPR027413">
    <property type="entry name" value="GROEL-like_equatorial_sf"/>
</dbReference>
<dbReference type="InterPro" id="IPR027410">
    <property type="entry name" value="TCP-1-like_intermed_sf"/>
</dbReference>
<dbReference type="NCBIfam" id="TIGR02348">
    <property type="entry name" value="GroEL"/>
    <property type="match status" value="1"/>
</dbReference>
<dbReference type="NCBIfam" id="NF000592">
    <property type="entry name" value="PRK00013.1"/>
    <property type="match status" value="1"/>
</dbReference>
<dbReference type="NCBIfam" id="NF009487">
    <property type="entry name" value="PRK12849.1"/>
    <property type="match status" value="1"/>
</dbReference>
<dbReference type="NCBIfam" id="NF009488">
    <property type="entry name" value="PRK12850.1"/>
    <property type="match status" value="1"/>
</dbReference>
<dbReference type="NCBIfam" id="NF009489">
    <property type="entry name" value="PRK12851.1"/>
    <property type="match status" value="1"/>
</dbReference>
<dbReference type="PANTHER" id="PTHR45633">
    <property type="entry name" value="60 KDA HEAT SHOCK PROTEIN, MITOCHONDRIAL"/>
    <property type="match status" value="1"/>
</dbReference>
<dbReference type="Pfam" id="PF00118">
    <property type="entry name" value="Cpn60_TCP1"/>
    <property type="match status" value="1"/>
</dbReference>
<dbReference type="PRINTS" id="PR00298">
    <property type="entry name" value="CHAPERONIN60"/>
</dbReference>
<dbReference type="SUPFAM" id="SSF52029">
    <property type="entry name" value="GroEL apical domain-like"/>
    <property type="match status" value="1"/>
</dbReference>
<dbReference type="SUPFAM" id="SSF48592">
    <property type="entry name" value="GroEL equatorial domain-like"/>
    <property type="match status" value="1"/>
</dbReference>
<dbReference type="SUPFAM" id="SSF54849">
    <property type="entry name" value="GroEL-intermediate domain like"/>
    <property type="match status" value="1"/>
</dbReference>
<dbReference type="PROSITE" id="PS00296">
    <property type="entry name" value="CHAPERONINS_CPN60"/>
    <property type="match status" value="1"/>
</dbReference>
<organism>
    <name type="scientific">Phocaeicola vulgatus (strain ATCC 8482 / DSM 1447 / JCM 5826 / CCUG 4940 / NBRC 14291 / NCTC 11154)</name>
    <name type="common">Bacteroides vulgatus</name>
    <dbReference type="NCBI Taxonomy" id="435590"/>
    <lineage>
        <taxon>Bacteria</taxon>
        <taxon>Pseudomonadati</taxon>
        <taxon>Bacteroidota</taxon>
        <taxon>Bacteroidia</taxon>
        <taxon>Bacteroidales</taxon>
        <taxon>Bacteroidaceae</taxon>
        <taxon>Phocaeicola</taxon>
    </lineage>
</organism>
<proteinExistence type="inferred from homology"/>
<protein>
    <recommendedName>
        <fullName evidence="1">Chaperonin GroEL</fullName>
        <ecNumber evidence="1">5.6.1.7</ecNumber>
    </recommendedName>
    <alternativeName>
        <fullName evidence="1">60 kDa chaperonin</fullName>
    </alternativeName>
    <alternativeName>
        <fullName evidence="1">Chaperonin-60</fullName>
        <shortName evidence="1">Cpn60</shortName>
    </alternativeName>
</protein>
<comment type="function">
    <text evidence="1">Together with its co-chaperonin GroES, plays an essential role in assisting protein folding. The GroEL-GroES system forms a nano-cage that allows encapsulation of the non-native substrate proteins and provides a physical environment optimized to promote and accelerate protein folding.</text>
</comment>
<comment type="catalytic activity">
    <reaction evidence="1">
        <text>ATP + H2O + a folded polypeptide = ADP + phosphate + an unfolded polypeptide.</text>
        <dbReference type="EC" id="5.6.1.7"/>
    </reaction>
</comment>
<comment type="subunit">
    <text evidence="1">Forms a cylinder of 14 subunits composed of two heptameric rings stacked back-to-back. Interacts with the co-chaperonin GroES.</text>
</comment>
<comment type="subcellular location">
    <subcellularLocation>
        <location evidence="1">Cytoplasm</location>
    </subcellularLocation>
</comment>
<comment type="similarity">
    <text evidence="1">Belongs to the chaperonin (HSP60) family.</text>
</comment>
<gene>
    <name evidence="1" type="primary">groEL</name>
    <name evidence="1" type="synonym">groL</name>
    <name type="ordered locus">BVU_0345</name>
</gene>
<name>CH60_PHOV8</name>
<feature type="chain" id="PRO_1000025753" description="Chaperonin GroEL">
    <location>
        <begin position="1"/>
        <end position="545"/>
    </location>
</feature>
<feature type="binding site" evidence="1">
    <location>
        <begin position="29"/>
        <end position="32"/>
    </location>
    <ligand>
        <name>ATP</name>
        <dbReference type="ChEBI" id="CHEBI:30616"/>
    </ligand>
</feature>
<feature type="binding site" evidence="1">
    <location>
        <position position="50"/>
    </location>
    <ligand>
        <name>ATP</name>
        <dbReference type="ChEBI" id="CHEBI:30616"/>
    </ligand>
</feature>
<feature type="binding site" evidence="1">
    <location>
        <begin position="86"/>
        <end position="90"/>
    </location>
    <ligand>
        <name>ATP</name>
        <dbReference type="ChEBI" id="CHEBI:30616"/>
    </ligand>
</feature>
<feature type="binding site" evidence="1">
    <location>
        <position position="415"/>
    </location>
    <ligand>
        <name>ATP</name>
        <dbReference type="ChEBI" id="CHEBI:30616"/>
    </ligand>
</feature>
<feature type="binding site" evidence="1">
    <location>
        <position position="495"/>
    </location>
    <ligand>
        <name>ATP</name>
        <dbReference type="ChEBI" id="CHEBI:30616"/>
    </ligand>
</feature>
<keyword id="KW-0067">ATP-binding</keyword>
<keyword id="KW-0143">Chaperone</keyword>
<keyword id="KW-0963">Cytoplasm</keyword>
<keyword id="KW-0413">Isomerase</keyword>
<keyword id="KW-0547">Nucleotide-binding</keyword>
<accession>A6KXA0</accession>
<reference key="1">
    <citation type="journal article" date="2007" name="PLoS Biol.">
        <title>Evolution of symbiotic bacteria in the distal human intestine.</title>
        <authorList>
            <person name="Xu J."/>
            <person name="Mahowald M.A."/>
            <person name="Ley R.E."/>
            <person name="Lozupone C.A."/>
            <person name="Hamady M."/>
            <person name="Martens E.C."/>
            <person name="Henrissat B."/>
            <person name="Coutinho P.M."/>
            <person name="Minx P."/>
            <person name="Latreille P."/>
            <person name="Cordum H."/>
            <person name="Van Brunt A."/>
            <person name="Kim K."/>
            <person name="Fulton R.S."/>
            <person name="Fulton L.A."/>
            <person name="Clifton S.W."/>
            <person name="Wilson R.K."/>
            <person name="Knight R.D."/>
            <person name="Gordon J.I."/>
        </authorList>
    </citation>
    <scope>NUCLEOTIDE SEQUENCE [LARGE SCALE GENOMIC DNA]</scope>
    <source>
        <strain>ATCC 8482 / DSM 1447 / JCM 5826 / CCUG 4940 / NBRC 14291 / NCTC 11154</strain>
    </source>
</reference>
<sequence>MAKDIKFNIDARDELKKGVDELANAVKVTLGPKGRNVIIEKKFGAPHITKDGVTVAKEVELADAFQNTGAQLVKSVASKTGDDAGDGTTTATVLAQSIVGVGLKNVTAGANPMDLKRGIDKAVAKVVESIKSQAEMVGDNYDKIEQVAAVSANNDPTIGKLIADAMRKVSKDGVITIEEAKGTDTTIGVVEGMQFDRGYLSAYFVTDTEKMECVMEHPYILIYDKKISNLKDFLPILEPAVQSGRPLLVIAEDVDSEALTTLVVNRLRSQLKICAVKAPGFGDRRKAMLEDIAVLTGGIVISEEKGLKLEQATLEMLGTCDKVTVSKDNTTIVNGAGAKENIQERINQIKAEIKNTTSDYDKEKLQERLAKLSGGVAVLYVGAASEVEMKEKKDRVDDALCATRAAIEEGIVPGGGVAYIRASEALEGLKGDNEDETTGIEIIKRAIEEPLRQIVANAGKEGAVVVQKVREGKGDFGYNARTDVYENLHAAGVVDPAKVTRVALENAASIAGMFLTTECVIVEKKEDKPEMPMGAPGMGGMGGMM</sequence>
<evidence type="ECO:0000255" key="1">
    <source>
        <dbReference type="HAMAP-Rule" id="MF_00600"/>
    </source>
</evidence>